<organism>
    <name type="scientific">Mus musculus</name>
    <name type="common">Mouse</name>
    <dbReference type="NCBI Taxonomy" id="10090"/>
    <lineage>
        <taxon>Eukaryota</taxon>
        <taxon>Metazoa</taxon>
        <taxon>Chordata</taxon>
        <taxon>Craniata</taxon>
        <taxon>Vertebrata</taxon>
        <taxon>Euteleostomi</taxon>
        <taxon>Mammalia</taxon>
        <taxon>Eutheria</taxon>
        <taxon>Euarchontoglires</taxon>
        <taxon>Glires</taxon>
        <taxon>Rodentia</taxon>
        <taxon>Myomorpha</taxon>
        <taxon>Muroidea</taxon>
        <taxon>Muridae</taxon>
        <taxon>Murinae</taxon>
        <taxon>Mus</taxon>
        <taxon>Mus</taxon>
    </lineage>
</organism>
<protein>
    <recommendedName>
        <fullName evidence="3">Phosphatidylinositol-3,5-bisphosphate 3-phosphatase MTMR6</fullName>
        <ecNumber evidence="3">3.1.3.95</ecNumber>
    </recommendedName>
    <alternativeName>
        <fullName evidence="15">Myotubularin-related protein 6</fullName>
    </alternativeName>
    <alternativeName>
        <fullName evidence="3">Phosphatidylinositol-3-phosphate phosphatase</fullName>
    </alternativeName>
</protein>
<gene>
    <name evidence="15" type="primary">Mtmr6</name>
</gene>
<dbReference type="EC" id="3.1.3.95" evidence="3"/>
<dbReference type="EMBL" id="AB517623">
    <property type="protein sequence ID" value="BAM76259.1"/>
    <property type="molecule type" value="mRNA"/>
</dbReference>
<dbReference type="EMBL" id="AK076218">
    <property type="protein sequence ID" value="BAC36259.1"/>
    <property type="molecule type" value="mRNA"/>
</dbReference>
<dbReference type="EMBL" id="AK154859">
    <property type="protein sequence ID" value="BAE32884.1"/>
    <property type="molecule type" value="mRNA"/>
</dbReference>
<dbReference type="EMBL" id="AC166113">
    <property type="status" value="NOT_ANNOTATED_CDS"/>
    <property type="molecule type" value="Genomic_DNA"/>
</dbReference>
<dbReference type="EMBL" id="CH466535">
    <property type="protein sequence ID" value="EDL36118.1"/>
    <property type="molecule type" value="Genomic_DNA"/>
</dbReference>
<dbReference type="EMBL" id="BC020019">
    <property type="protein sequence ID" value="AAH20019.1"/>
    <property type="molecule type" value="mRNA"/>
</dbReference>
<dbReference type="CCDS" id="CCDS27176.1">
    <molecule id="Q8VE11-1"/>
</dbReference>
<dbReference type="RefSeq" id="NP_001388129.1">
    <molecule id="Q8VE11-2"/>
    <property type="nucleotide sequence ID" value="NM_001401200.1"/>
</dbReference>
<dbReference type="RefSeq" id="NP_659092.1">
    <molecule id="Q8VE11-1"/>
    <property type="nucleotide sequence ID" value="NM_144843.5"/>
</dbReference>
<dbReference type="RefSeq" id="XP_017171460.1">
    <property type="nucleotide sequence ID" value="XM_017315971.1"/>
</dbReference>
<dbReference type="SMR" id="Q8VE11"/>
<dbReference type="BioGRID" id="230116">
    <property type="interactions" value="10"/>
</dbReference>
<dbReference type="FunCoup" id="Q8VE11">
    <property type="interactions" value="1865"/>
</dbReference>
<dbReference type="STRING" id="10090.ENSMUSP00000022563"/>
<dbReference type="GlyGen" id="Q8VE11">
    <property type="glycosylation" value="1 site, 1 N-linked glycan (1 site)"/>
</dbReference>
<dbReference type="iPTMnet" id="Q8VE11"/>
<dbReference type="PhosphoSitePlus" id="Q8VE11"/>
<dbReference type="SwissPalm" id="Q8VE11"/>
<dbReference type="jPOST" id="Q8VE11"/>
<dbReference type="PaxDb" id="10090-ENSMUSP00000022563"/>
<dbReference type="ProteomicsDB" id="287638">
    <molecule id="Q8VE11-1"/>
</dbReference>
<dbReference type="ProteomicsDB" id="341414"/>
<dbReference type="Pumba" id="Q8VE11"/>
<dbReference type="Antibodypedia" id="22544">
    <property type="antibodies" value="135 antibodies from 25 providers"/>
</dbReference>
<dbReference type="DNASU" id="219135"/>
<dbReference type="Ensembl" id="ENSMUST00000022563.9">
    <molecule id="Q8VE11-1"/>
    <property type="protein sequence ID" value="ENSMUSP00000022563.8"/>
    <property type="gene ID" value="ENSMUSG00000021987.10"/>
</dbReference>
<dbReference type="Ensembl" id="ENSMUST00000224366.2">
    <molecule id="Q8VE11-2"/>
    <property type="protein sequence ID" value="ENSMUSP00000153403.2"/>
    <property type="gene ID" value="ENSMUSG00000021987.10"/>
</dbReference>
<dbReference type="GeneID" id="219135"/>
<dbReference type="KEGG" id="mmu:219135"/>
<dbReference type="UCSC" id="uc007ufa.2">
    <molecule id="Q8VE11-1"/>
    <property type="organism name" value="mouse"/>
</dbReference>
<dbReference type="UCSC" id="uc033gri.1">
    <property type="organism name" value="mouse"/>
</dbReference>
<dbReference type="AGR" id="MGI:2145637"/>
<dbReference type="CTD" id="9107"/>
<dbReference type="MGI" id="MGI:2145637">
    <property type="gene designation" value="Mtmr6"/>
</dbReference>
<dbReference type="VEuPathDB" id="HostDB:ENSMUSG00000021987"/>
<dbReference type="eggNOG" id="KOG1089">
    <property type="taxonomic scope" value="Eukaryota"/>
</dbReference>
<dbReference type="GeneTree" id="ENSGT00940000158055"/>
<dbReference type="HOGENOM" id="CLU_001839_3_2_1"/>
<dbReference type="InParanoid" id="Q8VE11"/>
<dbReference type="OMA" id="QWQHTDV"/>
<dbReference type="PhylomeDB" id="Q8VE11"/>
<dbReference type="TreeFam" id="TF315197"/>
<dbReference type="Reactome" id="R-MMU-1660499">
    <property type="pathway name" value="Synthesis of PIPs at the plasma membrane"/>
</dbReference>
<dbReference type="BioGRID-ORCS" id="219135">
    <property type="hits" value="11 hits in 82 CRISPR screens"/>
</dbReference>
<dbReference type="ChiTaRS" id="Mtmr6">
    <property type="organism name" value="mouse"/>
</dbReference>
<dbReference type="PRO" id="PR:Q8VE11"/>
<dbReference type="Proteomes" id="UP000000589">
    <property type="component" value="Chromosome 14"/>
</dbReference>
<dbReference type="RNAct" id="Q8VE11">
    <property type="molecule type" value="protein"/>
</dbReference>
<dbReference type="Bgee" id="ENSMUSG00000021987">
    <property type="expression patterns" value="Expressed in spermatocyte and 261 other cell types or tissues"/>
</dbReference>
<dbReference type="GO" id="GO:0005783">
    <property type="term" value="C:endoplasmic reticulum"/>
    <property type="evidence" value="ECO:0007669"/>
    <property type="project" value="UniProtKB-SubCell"/>
</dbReference>
<dbReference type="GO" id="GO:0005793">
    <property type="term" value="C:endoplasmic reticulum-Golgi intermediate compartment"/>
    <property type="evidence" value="ECO:0007669"/>
    <property type="project" value="UniProtKB-SubCell"/>
</dbReference>
<dbReference type="GO" id="GO:0005635">
    <property type="term" value="C:nuclear envelope"/>
    <property type="evidence" value="ECO:0007669"/>
    <property type="project" value="Ensembl"/>
</dbReference>
<dbReference type="GO" id="GO:0032587">
    <property type="term" value="C:ruffle membrane"/>
    <property type="evidence" value="ECO:0007669"/>
    <property type="project" value="UniProtKB-SubCell"/>
</dbReference>
<dbReference type="GO" id="GO:0052629">
    <property type="term" value="F:phosphatidylinositol-3,5-bisphosphate 3-phosphatase activity"/>
    <property type="evidence" value="ECO:0007669"/>
    <property type="project" value="UniProtKB-EC"/>
</dbReference>
<dbReference type="GO" id="GO:0004438">
    <property type="term" value="F:phosphatidylinositol-3-phosphate phosphatase activity"/>
    <property type="evidence" value="ECO:0007669"/>
    <property type="project" value="UniProtKB-EC"/>
</dbReference>
<dbReference type="GO" id="GO:0006897">
    <property type="term" value="P:endocytosis"/>
    <property type="evidence" value="ECO:0007669"/>
    <property type="project" value="UniProtKB-KW"/>
</dbReference>
<dbReference type="GO" id="GO:0046856">
    <property type="term" value="P:phosphatidylinositol dephosphorylation"/>
    <property type="evidence" value="ECO:0007669"/>
    <property type="project" value="Ensembl"/>
</dbReference>
<dbReference type="CDD" id="cd13343">
    <property type="entry name" value="PH-GRAM_MTMR6"/>
    <property type="match status" value="1"/>
</dbReference>
<dbReference type="FunFam" id="2.30.29.30:FF:000135">
    <property type="entry name" value="Myotubularin related protein 6"/>
    <property type="match status" value="1"/>
</dbReference>
<dbReference type="Gene3D" id="2.30.29.30">
    <property type="entry name" value="Pleckstrin-homology domain (PH domain)/Phosphotyrosine-binding domain (PTB)"/>
    <property type="match status" value="1"/>
</dbReference>
<dbReference type="InterPro" id="IPR035998">
    <property type="entry name" value="MTMR6_PH-GRAM"/>
</dbReference>
<dbReference type="InterPro" id="IPR030564">
    <property type="entry name" value="Myotubularin"/>
</dbReference>
<dbReference type="InterPro" id="IPR010569">
    <property type="entry name" value="Myotubularin-like_Pase_dom"/>
</dbReference>
<dbReference type="InterPro" id="IPR011993">
    <property type="entry name" value="PH-like_dom_sf"/>
</dbReference>
<dbReference type="InterPro" id="IPR029021">
    <property type="entry name" value="Prot-tyrosine_phosphatase-like"/>
</dbReference>
<dbReference type="InterPro" id="IPR016130">
    <property type="entry name" value="Tyr_Pase_AS"/>
</dbReference>
<dbReference type="InterPro" id="IPR003595">
    <property type="entry name" value="Tyr_Pase_cat"/>
</dbReference>
<dbReference type="PANTHER" id="PTHR10807">
    <property type="entry name" value="MYOTUBULARIN-RELATED"/>
    <property type="match status" value="1"/>
</dbReference>
<dbReference type="PANTHER" id="PTHR10807:SF34">
    <property type="entry name" value="MYOTUBULARIN-RELATED PROTEIN 6"/>
    <property type="match status" value="1"/>
</dbReference>
<dbReference type="Pfam" id="PF06602">
    <property type="entry name" value="Myotub-related"/>
    <property type="match status" value="1"/>
</dbReference>
<dbReference type="Pfam" id="PF21098">
    <property type="entry name" value="PH-GRAM_MTMR6-like"/>
    <property type="match status" value="1"/>
</dbReference>
<dbReference type="SMART" id="SM00404">
    <property type="entry name" value="PTPc_motif"/>
    <property type="match status" value="1"/>
</dbReference>
<dbReference type="SUPFAM" id="SSF52799">
    <property type="entry name" value="(Phosphotyrosine protein) phosphatases II"/>
    <property type="match status" value="1"/>
</dbReference>
<dbReference type="SUPFAM" id="SSF50729">
    <property type="entry name" value="PH domain-like"/>
    <property type="match status" value="1"/>
</dbReference>
<dbReference type="PROSITE" id="PS51339">
    <property type="entry name" value="PPASE_MYOTUBULARIN"/>
    <property type="match status" value="1"/>
</dbReference>
<dbReference type="PROSITE" id="PS00383">
    <property type="entry name" value="TYR_PHOSPHATASE_1"/>
    <property type="match status" value="1"/>
</dbReference>
<accession>Q8VE11</accession>
<accession>L8AZD2</accession>
<name>MTMR6_MOUSE</name>
<reference key="1">
    <citation type="journal article" date="2013" name="J. Biol. Chem.">
        <title>Phosphatidylinositol 3-phosphatase myotubularin-related protein 6 (MTMR6) is regulated by small GTPase Rab1B in the early secretory and autophagic pathways.</title>
        <authorList>
            <person name="Mochizuki Y."/>
            <person name="Ohashi R."/>
            <person name="Kawamura T."/>
            <person name="Iwanari H."/>
            <person name="Kodama T."/>
            <person name="Naito M."/>
            <person name="Hamakubo T."/>
        </authorList>
    </citation>
    <scope>NUCLEOTIDE SEQUENCE [MRNA] (ISOFORM 2)</scope>
    <scope>INTERACTION WITH MTMR9 AND RAB1B</scope>
    <scope>TISSUE SPECIFICITY</scope>
    <scope>DOMAIN</scope>
</reference>
<reference evidence="12" key="2">
    <citation type="journal article" date="2005" name="Science">
        <title>The transcriptional landscape of the mammalian genome.</title>
        <authorList>
            <person name="Carninci P."/>
            <person name="Kasukawa T."/>
            <person name="Katayama S."/>
            <person name="Gough J."/>
            <person name="Frith M.C."/>
            <person name="Maeda N."/>
            <person name="Oyama R."/>
            <person name="Ravasi T."/>
            <person name="Lenhard B."/>
            <person name="Wells C."/>
            <person name="Kodzius R."/>
            <person name="Shimokawa K."/>
            <person name="Bajic V.B."/>
            <person name="Brenner S.E."/>
            <person name="Batalov S."/>
            <person name="Forrest A.R."/>
            <person name="Zavolan M."/>
            <person name="Davis M.J."/>
            <person name="Wilming L.G."/>
            <person name="Aidinis V."/>
            <person name="Allen J.E."/>
            <person name="Ambesi-Impiombato A."/>
            <person name="Apweiler R."/>
            <person name="Aturaliya R.N."/>
            <person name="Bailey T.L."/>
            <person name="Bansal M."/>
            <person name="Baxter L."/>
            <person name="Beisel K.W."/>
            <person name="Bersano T."/>
            <person name="Bono H."/>
            <person name="Chalk A.M."/>
            <person name="Chiu K.P."/>
            <person name="Choudhary V."/>
            <person name="Christoffels A."/>
            <person name="Clutterbuck D.R."/>
            <person name="Crowe M.L."/>
            <person name="Dalla E."/>
            <person name="Dalrymple B.P."/>
            <person name="de Bono B."/>
            <person name="Della Gatta G."/>
            <person name="di Bernardo D."/>
            <person name="Down T."/>
            <person name="Engstrom P."/>
            <person name="Fagiolini M."/>
            <person name="Faulkner G."/>
            <person name="Fletcher C.F."/>
            <person name="Fukushima T."/>
            <person name="Furuno M."/>
            <person name="Futaki S."/>
            <person name="Gariboldi M."/>
            <person name="Georgii-Hemming P."/>
            <person name="Gingeras T.R."/>
            <person name="Gojobori T."/>
            <person name="Green R.E."/>
            <person name="Gustincich S."/>
            <person name="Harbers M."/>
            <person name="Hayashi Y."/>
            <person name="Hensch T.K."/>
            <person name="Hirokawa N."/>
            <person name="Hill D."/>
            <person name="Huminiecki L."/>
            <person name="Iacono M."/>
            <person name="Ikeo K."/>
            <person name="Iwama A."/>
            <person name="Ishikawa T."/>
            <person name="Jakt M."/>
            <person name="Kanapin A."/>
            <person name="Katoh M."/>
            <person name="Kawasawa Y."/>
            <person name="Kelso J."/>
            <person name="Kitamura H."/>
            <person name="Kitano H."/>
            <person name="Kollias G."/>
            <person name="Krishnan S.P."/>
            <person name="Kruger A."/>
            <person name="Kummerfeld S.K."/>
            <person name="Kurochkin I.V."/>
            <person name="Lareau L.F."/>
            <person name="Lazarevic D."/>
            <person name="Lipovich L."/>
            <person name="Liu J."/>
            <person name="Liuni S."/>
            <person name="McWilliam S."/>
            <person name="Madan Babu M."/>
            <person name="Madera M."/>
            <person name="Marchionni L."/>
            <person name="Matsuda H."/>
            <person name="Matsuzawa S."/>
            <person name="Miki H."/>
            <person name="Mignone F."/>
            <person name="Miyake S."/>
            <person name="Morris K."/>
            <person name="Mottagui-Tabar S."/>
            <person name="Mulder N."/>
            <person name="Nakano N."/>
            <person name="Nakauchi H."/>
            <person name="Ng P."/>
            <person name="Nilsson R."/>
            <person name="Nishiguchi S."/>
            <person name="Nishikawa S."/>
            <person name="Nori F."/>
            <person name="Ohara O."/>
            <person name="Okazaki Y."/>
            <person name="Orlando V."/>
            <person name="Pang K.C."/>
            <person name="Pavan W.J."/>
            <person name="Pavesi G."/>
            <person name="Pesole G."/>
            <person name="Petrovsky N."/>
            <person name="Piazza S."/>
            <person name="Reed J."/>
            <person name="Reid J.F."/>
            <person name="Ring B.Z."/>
            <person name="Ringwald M."/>
            <person name="Rost B."/>
            <person name="Ruan Y."/>
            <person name="Salzberg S.L."/>
            <person name="Sandelin A."/>
            <person name="Schneider C."/>
            <person name="Schoenbach C."/>
            <person name="Sekiguchi K."/>
            <person name="Semple C.A."/>
            <person name="Seno S."/>
            <person name="Sessa L."/>
            <person name="Sheng Y."/>
            <person name="Shibata Y."/>
            <person name="Shimada H."/>
            <person name="Shimada K."/>
            <person name="Silva D."/>
            <person name="Sinclair B."/>
            <person name="Sperling S."/>
            <person name="Stupka E."/>
            <person name="Sugiura K."/>
            <person name="Sultana R."/>
            <person name="Takenaka Y."/>
            <person name="Taki K."/>
            <person name="Tammoja K."/>
            <person name="Tan S.L."/>
            <person name="Tang S."/>
            <person name="Taylor M.S."/>
            <person name="Tegner J."/>
            <person name="Teichmann S.A."/>
            <person name="Ueda H.R."/>
            <person name="van Nimwegen E."/>
            <person name="Verardo R."/>
            <person name="Wei C.L."/>
            <person name="Yagi K."/>
            <person name="Yamanishi H."/>
            <person name="Zabarovsky E."/>
            <person name="Zhu S."/>
            <person name="Zimmer A."/>
            <person name="Hide W."/>
            <person name="Bult C."/>
            <person name="Grimmond S.M."/>
            <person name="Teasdale R.D."/>
            <person name="Liu E.T."/>
            <person name="Brusic V."/>
            <person name="Quackenbush J."/>
            <person name="Wahlestedt C."/>
            <person name="Mattick J.S."/>
            <person name="Hume D.A."/>
            <person name="Kai C."/>
            <person name="Sasaki D."/>
            <person name="Tomaru Y."/>
            <person name="Fukuda S."/>
            <person name="Kanamori-Katayama M."/>
            <person name="Suzuki M."/>
            <person name="Aoki J."/>
            <person name="Arakawa T."/>
            <person name="Iida J."/>
            <person name="Imamura K."/>
            <person name="Itoh M."/>
            <person name="Kato T."/>
            <person name="Kawaji H."/>
            <person name="Kawagashira N."/>
            <person name="Kawashima T."/>
            <person name="Kojima M."/>
            <person name="Kondo S."/>
            <person name="Konno H."/>
            <person name="Nakano K."/>
            <person name="Ninomiya N."/>
            <person name="Nishio T."/>
            <person name="Okada M."/>
            <person name="Plessy C."/>
            <person name="Shibata K."/>
            <person name="Shiraki T."/>
            <person name="Suzuki S."/>
            <person name="Tagami M."/>
            <person name="Waki K."/>
            <person name="Watahiki A."/>
            <person name="Okamura-Oho Y."/>
            <person name="Suzuki H."/>
            <person name="Kawai J."/>
            <person name="Hayashizaki Y."/>
        </authorList>
    </citation>
    <scope>NUCLEOTIDE SEQUENCE [LARGE SCALE MRNA] (ISOFORM 1)</scope>
    <source>
        <strain evidence="12">C57BL/6J</strain>
        <strain evidence="13">NOD</strain>
        <tissue evidence="13">Dendritic cell</tissue>
        <tissue evidence="12">Embryonic head</tissue>
    </source>
</reference>
<reference evidence="16" key="3">
    <citation type="journal article" date="2009" name="PLoS Biol.">
        <title>Lineage-specific biology revealed by a finished genome assembly of the mouse.</title>
        <authorList>
            <person name="Church D.M."/>
            <person name="Goodstadt L."/>
            <person name="Hillier L.W."/>
            <person name="Zody M.C."/>
            <person name="Goldstein S."/>
            <person name="She X."/>
            <person name="Bult C.J."/>
            <person name="Agarwala R."/>
            <person name="Cherry J.L."/>
            <person name="DiCuccio M."/>
            <person name="Hlavina W."/>
            <person name="Kapustin Y."/>
            <person name="Meric P."/>
            <person name="Maglott D."/>
            <person name="Birtle Z."/>
            <person name="Marques A.C."/>
            <person name="Graves T."/>
            <person name="Zhou S."/>
            <person name="Teague B."/>
            <person name="Potamousis K."/>
            <person name="Churas C."/>
            <person name="Place M."/>
            <person name="Herschleb J."/>
            <person name="Runnheim R."/>
            <person name="Forrest D."/>
            <person name="Amos-Landgraf J."/>
            <person name="Schwartz D.C."/>
            <person name="Cheng Z."/>
            <person name="Lindblad-Toh K."/>
            <person name="Eichler E.E."/>
            <person name="Ponting C.P."/>
        </authorList>
    </citation>
    <scope>NUCLEOTIDE SEQUENCE [LARGE SCALE GENOMIC DNA] (ISOFORM 2)</scope>
    <source>
        <strain evidence="16">C57BL/6J</strain>
    </source>
</reference>
<reference evidence="14" key="4">
    <citation type="submission" date="2005-09" db="EMBL/GenBank/DDBJ databases">
        <authorList>
            <person name="Mural R.J."/>
            <person name="Adams M.D."/>
            <person name="Myers E.W."/>
            <person name="Smith H.O."/>
            <person name="Venter J.C."/>
        </authorList>
    </citation>
    <scope>NUCLEOTIDE SEQUENCE [LARGE SCALE GENOMIC DNA] (ISOFORM 1)</scope>
</reference>
<reference evidence="11" key="5">
    <citation type="journal article" date="2004" name="Genome Res.">
        <title>The status, quality, and expansion of the NIH full-length cDNA project: the Mammalian Gene Collection (MGC).</title>
        <authorList>
            <consortium name="The MGC Project Team"/>
        </authorList>
    </citation>
    <scope>NUCLEOTIDE SEQUENCE [LARGE SCALE MRNA] (ISOFORM 1)</scope>
    <source>
        <strain evidence="11">FVB/N</strain>
        <tissue evidence="11">Mammary tumor</tissue>
    </source>
</reference>
<reference key="6">
    <citation type="journal article" date="2003" name="Proc. Natl. Acad. Sci. U.S.A.">
        <title>Characterization of myotubularin-related protein 7 and its binding partner, myotubularin-related protein 9.</title>
        <authorList>
            <person name="Mochizuki Y."/>
            <person name="Majerus P.W."/>
        </authorList>
    </citation>
    <scope>INTERACTION WITH MTMR9</scope>
</reference>
<reference key="7">
    <citation type="journal article" date="2007" name="J. Immunol.">
        <title>Quantitative time-resolved phosphoproteomic analysis of mast cell signaling.</title>
        <authorList>
            <person name="Cao L."/>
            <person name="Yu K."/>
            <person name="Banh C."/>
            <person name="Nguyen V."/>
            <person name="Ritz A."/>
            <person name="Raphael B.J."/>
            <person name="Kawakami Y."/>
            <person name="Kawakami T."/>
            <person name="Salomon A.R."/>
        </authorList>
    </citation>
    <scope>PHOSPHORYLATION [LARGE SCALE ANALYSIS] AT TYR-108</scope>
    <scope>IDENTIFICATION BY MASS SPECTROMETRY [LARGE SCALE ANALYSIS]</scope>
    <source>
        <tissue>Mast cell</tissue>
    </source>
</reference>
<reference key="8">
    <citation type="journal article" date="2010" name="Cell">
        <title>A tissue-specific atlas of mouse protein phosphorylation and expression.</title>
        <authorList>
            <person name="Huttlin E.L."/>
            <person name="Jedrychowski M.P."/>
            <person name="Elias J.E."/>
            <person name="Goswami T."/>
            <person name="Rad R."/>
            <person name="Beausoleil S.A."/>
            <person name="Villen J."/>
            <person name="Haas W."/>
            <person name="Sowa M.E."/>
            <person name="Gygi S.P."/>
        </authorList>
    </citation>
    <scope>IDENTIFICATION BY MASS SPECTROMETRY [LARGE SCALE ANALYSIS]</scope>
    <source>
        <tissue>Brain</tissue>
        <tissue>Lung</tissue>
        <tissue>Spleen</tissue>
        <tissue>Testis</tissue>
    </source>
</reference>
<reference key="9">
    <citation type="journal article" date="2014" name="Proc. Natl. Acad. Sci. U.S.A.">
        <title>Sequential breakdown of 3-phosphorylated phosphoinositides is essential for the completion of macropinocytosis.</title>
        <authorList>
            <person name="Maekawa M."/>
            <person name="Terasaka S."/>
            <person name="Mochizuki Y."/>
            <person name="Kawai K."/>
            <person name="Ikeda Y."/>
            <person name="Araki N."/>
            <person name="Skolnik E.Y."/>
            <person name="Taguchi T."/>
            <person name="Arai H."/>
        </authorList>
    </citation>
    <scope>FUNCTION</scope>
    <scope>SUBCELLULAR LOCATION</scope>
    <scope>DOMAIN</scope>
    <scope>MUTAGENESIS OF 336-CYS--ARG-342</scope>
</reference>
<keyword id="KW-0025">Alternative splicing</keyword>
<keyword id="KW-1003">Cell membrane</keyword>
<keyword id="KW-0966">Cell projection</keyword>
<keyword id="KW-0963">Cytoplasm</keyword>
<keyword id="KW-0254">Endocytosis</keyword>
<keyword id="KW-0256">Endoplasmic reticulum</keyword>
<keyword id="KW-0378">Hydrolase</keyword>
<keyword id="KW-0443">Lipid metabolism</keyword>
<keyword id="KW-0472">Membrane</keyword>
<keyword id="KW-0597">Phosphoprotein</keyword>
<keyword id="KW-1185">Reference proteome</keyword>
<comment type="function">
    <text evidence="1 3 9">Lipid phosphatase that specifically dephosphorylates the D-3 position of phosphatidylinositol 3-phosphate and phosphatidylinositol 3,5-bisphosphate, generating phosphatidylinositol and phosphatidylinositol 5-phosphate. Binds with high affinity to phosphatidylinositol 3,5-bisphosphate (PtdIns(3,5)P2) but also to phosphatidylinositol 3-phosphate (PtdIns(3)P), phosphatidylinositol 4-phosphate (PtdIns(4)P), and phosphatidylinositol 5-phosphate (PtdIns(5)P), phosphatidic acid and phosphatidylserine (By similarity). Negatively regulates ER-Golgi protein transport (By similarity). Probably in association with MTMR9, plays a role in the late stages of macropinocytosis by dephosphorylating phosphatidylinositol 3-phosphate in membrane ruffles (PubMed:24591580). Acts as a negative regulator of KCNN4/KCa3.1 channel activity in CD4(+) T-cells possibly by decreasing intracellular levels of phosphatidylinositol 3-phosphate. Negatively regulates proliferation of reactivated CD4(+) T-cells. In complex with MTMR9, negatively regulates DNA damage-induced apoptosis. The formation of the MTMR6-MTMR9 complex stabilizes both MTMR6 and MTMR9 protein levels (By similarity).</text>
</comment>
<comment type="catalytic activity">
    <reaction evidence="3">
        <text>a 1,2-diacyl-sn-glycero-3-phospho-(1D-myo-inositol-3,5-bisphosphate) + H2O = a 1,2-diacyl-sn-glycero-3-phospho-(1D-myo-inositol-5-phosphate) + phosphate</text>
        <dbReference type="Rhea" id="RHEA:39019"/>
        <dbReference type="ChEBI" id="CHEBI:15377"/>
        <dbReference type="ChEBI" id="CHEBI:43474"/>
        <dbReference type="ChEBI" id="CHEBI:57795"/>
        <dbReference type="ChEBI" id="CHEBI:57923"/>
        <dbReference type="EC" id="3.1.3.95"/>
    </reaction>
</comment>
<comment type="catalytic activity">
    <reaction evidence="3">
        <text>a 1,2-diacyl-sn-glycero-3-phospho-(1D-myo-inositol-3-phosphate) + H2O = a 1,2-diacyl-sn-glycero-3-phospho-(1D-myo-inositol) + phosphate</text>
        <dbReference type="Rhea" id="RHEA:12316"/>
        <dbReference type="ChEBI" id="CHEBI:15377"/>
        <dbReference type="ChEBI" id="CHEBI:43474"/>
        <dbReference type="ChEBI" id="CHEBI:57880"/>
        <dbReference type="ChEBI" id="CHEBI:58088"/>
    </reaction>
</comment>
<comment type="catalytic activity">
    <reaction evidence="3">
        <text>1,2-dioctanoyl-sn-glycero-3-phospho-(1D-myo-inositol-3,5-bisphosphate) + H2O = 1,2-dioctanoyl-sn-glycero-3-phospho-(1D-myo-inositol-5-phosphate) + phosphate</text>
        <dbReference type="Rhea" id="RHEA:45632"/>
        <dbReference type="ChEBI" id="CHEBI:15377"/>
        <dbReference type="ChEBI" id="CHEBI:43474"/>
        <dbReference type="ChEBI" id="CHEBI:78911"/>
        <dbReference type="ChEBI" id="CHEBI:85342"/>
    </reaction>
</comment>
<comment type="catalytic activity">
    <reaction evidence="3">
        <text>1,2-dioctanoyl-sn-glycero-3-phospho-(1-D-myo-inositol-3-phosphate) + H2O = 1,2-dioctanoyl-sn-glycero-3-phospho-(1D-myo-inositol) + phosphate</text>
        <dbReference type="Rhea" id="RHEA:42328"/>
        <dbReference type="ChEBI" id="CHEBI:15377"/>
        <dbReference type="ChEBI" id="CHEBI:43474"/>
        <dbReference type="ChEBI" id="CHEBI:65221"/>
        <dbReference type="ChEBI" id="CHEBI:78934"/>
    </reaction>
</comment>
<comment type="activity regulation">
    <text evidence="3">Allosterically activated by phosphatidylserine and/or phosphatidylinositol 4-phosphate (PtdIns(4)P), and phosphatidylinositol 5-phosphate (PtdIns(5)P) (By similarity). Interaction with MTMR9 increases catalytic activity towards phosphatidylinositol 3,5-bisphosphate (By similarity).</text>
</comment>
<comment type="subunit">
    <text evidence="3 7 8">Homodimer (By similarity). Heterodimer (via C-terminus) with MTMR9 (via C-terminus) (PubMed:12890864, PubMed:23188820). Interacts with ALKBH4 (By similarity). Interacts with KCNN4 (By similarity). Interacts (via GRAM domain) with RAB1B (in GDP-bound form); the interaction regulates MTMR6 recruitment to the endoplasmic reticulum-Golgi intermediate compartment (PubMed:23188820).</text>
</comment>
<comment type="subcellular location">
    <subcellularLocation>
        <location evidence="9">Cytoplasm</location>
    </subcellularLocation>
    <subcellularLocation>
        <location evidence="3">Endoplasmic reticulum-Golgi intermediate compartment</location>
    </subcellularLocation>
    <subcellularLocation>
        <location evidence="9">Cell projection</location>
        <location evidence="9">Ruffle membrane</location>
        <topology evidence="10">Peripheral membrane protein</topology>
        <orientation evidence="10">Cytoplasmic side</orientation>
    </subcellularLocation>
    <subcellularLocation>
        <location evidence="3">Endoplasmic reticulum</location>
    </subcellularLocation>
    <text evidence="1 3 9">Localizes to ruffles during EGF-induced macropinocytosis (PubMed:24591580). Colocalizes with MTMR9 to the perinuclear region (By similarity). Partially localizes to the endoplasmic reticulum (By similarity). Co-localizes with RAB1B to the endoplasmic reticulum-Golgi intermediate compartment and to the peri-Golgi region (By similarity).</text>
</comment>
<comment type="alternative products">
    <event type="alternative splicing"/>
    <isoform>
        <id>Q8VE11-1</id>
        <name>1</name>
        <sequence type="displayed"/>
    </isoform>
    <isoform>
        <id>Q8VE11-2</id>
        <name>2</name>
        <sequence type="described" ref="VSP_060069"/>
    </isoform>
</comment>
<comment type="tissue specificity">
    <text evidence="8">Isoform 1: Ubiquitously expressed including in heart, brain, spleen, lung, liver, muscle, kidney and testis (at protein level) (PubMed:23188820). Isoform 2: Expressed in testis (at protein level) (PubMed:23188820).</text>
</comment>
<comment type="domain">
    <text evidence="9">The GRAM domain is required for cell membrane localization.</text>
</comment>
<comment type="domain">
    <text evidence="8">The C-terminus domain (aa 502-617) mediates interaction with MTMR9.</text>
</comment>
<comment type="similarity">
    <text evidence="4">Belongs to the protein-tyrosine phosphatase family. Non-receptor class myotubularin subfamily.</text>
</comment>
<feature type="chain" id="PRO_0000367041" description="Phosphatidylinositol-3,5-bisphosphate 3-phosphatase MTMR6">
    <location>
        <begin position="1"/>
        <end position="617"/>
    </location>
</feature>
<feature type="domain" description="GRAM" evidence="4">
    <location>
        <begin position="1"/>
        <end position="101"/>
    </location>
</feature>
<feature type="domain" description="Myotubularin phosphatase" evidence="5">
    <location>
        <begin position="124"/>
        <end position="499"/>
    </location>
</feature>
<feature type="region of interest" description="Interaction with RAB1B" evidence="8">
    <location>
        <begin position="2"/>
        <end position="141"/>
    </location>
</feature>
<feature type="active site" description="Phosphocysteine intermediate" evidence="2 6">
    <location>
        <position position="336"/>
    </location>
</feature>
<feature type="binding site" evidence="2">
    <location>
        <position position="248"/>
    </location>
    <ligand>
        <name>a 1,2-diacyl-sn-glycero-3-phospho-(1D-myo-inositol-3,5-bisphosphate)</name>
        <dbReference type="ChEBI" id="CHEBI:57923"/>
    </ligand>
</feature>
<feature type="binding site" evidence="2">
    <location>
        <position position="248"/>
    </location>
    <ligand>
        <name>a 1,2-diacyl-sn-glycero-3-phospho-(1D-myo-inositol-3-phosphate)</name>
        <dbReference type="ChEBI" id="CHEBI:58088"/>
    </ligand>
</feature>
<feature type="binding site" evidence="2">
    <location>
        <position position="273"/>
    </location>
    <ligand>
        <name>a 1,2-diacyl-sn-glycero-3-phospho-(1D-myo-inositol-3,5-bisphosphate)</name>
        <dbReference type="ChEBI" id="CHEBI:57923"/>
    </ligand>
</feature>
<feature type="binding site" evidence="2">
    <location>
        <position position="273"/>
    </location>
    <ligand>
        <name>a 1,2-diacyl-sn-glycero-3-phospho-(1D-myo-inositol-3-phosphate)</name>
        <dbReference type="ChEBI" id="CHEBI:58088"/>
    </ligand>
</feature>
<feature type="binding site" evidence="2">
    <location>
        <position position="274"/>
    </location>
    <ligand>
        <name>a 1,2-diacyl-sn-glycero-3-phospho-(1D-myo-inositol-3,5-bisphosphate)</name>
        <dbReference type="ChEBI" id="CHEBI:57923"/>
    </ligand>
</feature>
<feature type="binding site" evidence="2">
    <location>
        <position position="274"/>
    </location>
    <ligand>
        <name>a 1,2-diacyl-sn-glycero-3-phospho-(1D-myo-inositol-3-phosphate)</name>
        <dbReference type="ChEBI" id="CHEBI:58088"/>
    </ligand>
</feature>
<feature type="binding site" evidence="2">
    <location>
        <position position="337"/>
    </location>
    <ligand>
        <name>a 1,2-diacyl-sn-glycero-3-phospho-(1D-myo-inositol-3,5-bisphosphate)</name>
        <dbReference type="ChEBI" id="CHEBI:57923"/>
    </ligand>
</feature>
<feature type="binding site" evidence="2">
    <location>
        <position position="337"/>
    </location>
    <ligand>
        <name>a 1,2-diacyl-sn-glycero-3-phospho-(1D-myo-inositol-3-phosphate)</name>
        <dbReference type="ChEBI" id="CHEBI:58088"/>
    </ligand>
</feature>
<feature type="binding site" evidence="2">
    <location>
        <position position="338"/>
    </location>
    <ligand>
        <name>a 1,2-diacyl-sn-glycero-3-phospho-(1D-myo-inositol-3,5-bisphosphate)</name>
        <dbReference type="ChEBI" id="CHEBI:57923"/>
    </ligand>
</feature>
<feature type="binding site" evidence="2">
    <location>
        <position position="338"/>
    </location>
    <ligand>
        <name>a 1,2-diacyl-sn-glycero-3-phospho-(1D-myo-inositol-3-phosphate)</name>
        <dbReference type="ChEBI" id="CHEBI:58088"/>
    </ligand>
</feature>
<feature type="binding site" evidence="2">
    <location>
        <position position="339"/>
    </location>
    <ligand>
        <name>a 1,2-diacyl-sn-glycero-3-phospho-(1D-myo-inositol-3,5-bisphosphate)</name>
        <dbReference type="ChEBI" id="CHEBI:57923"/>
    </ligand>
</feature>
<feature type="binding site" evidence="2">
    <location>
        <position position="339"/>
    </location>
    <ligand>
        <name>a 1,2-diacyl-sn-glycero-3-phospho-(1D-myo-inositol-3-phosphate)</name>
        <dbReference type="ChEBI" id="CHEBI:58088"/>
    </ligand>
</feature>
<feature type="binding site" evidence="2">
    <location>
        <position position="340"/>
    </location>
    <ligand>
        <name>a 1,2-diacyl-sn-glycero-3-phospho-(1D-myo-inositol-3,5-bisphosphate)</name>
        <dbReference type="ChEBI" id="CHEBI:57923"/>
    </ligand>
</feature>
<feature type="binding site" evidence="2">
    <location>
        <position position="340"/>
    </location>
    <ligand>
        <name>a 1,2-diacyl-sn-glycero-3-phospho-(1D-myo-inositol-3-phosphate)</name>
        <dbReference type="ChEBI" id="CHEBI:58088"/>
    </ligand>
</feature>
<feature type="binding site" evidence="2">
    <location>
        <position position="341"/>
    </location>
    <ligand>
        <name>a 1,2-diacyl-sn-glycero-3-phospho-(1D-myo-inositol-3,5-bisphosphate)</name>
        <dbReference type="ChEBI" id="CHEBI:57923"/>
    </ligand>
</feature>
<feature type="binding site" evidence="2">
    <location>
        <position position="341"/>
    </location>
    <ligand>
        <name>a 1,2-diacyl-sn-glycero-3-phospho-(1D-myo-inositol-3-phosphate)</name>
        <dbReference type="ChEBI" id="CHEBI:58088"/>
    </ligand>
</feature>
<feature type="binding site" evidence="2">
    <location>
        <position position="342"/>
    </location>
    <ligand>
        <name>a 1,2-diacyl-sn-glycero-3-phospho-(1D-myo-inositol-3,5-bisphosphate)</name>
        <dbReference type="ChEBI" id="CHEBI:57923"/>
    </ligand>
</feature>
<feature type="binding site" evidence="2">
    <location>
        <position position="342"/>
    </location>
    <ligand>
        <name>a 1,2-diacyl-sn-glycero-3-phospho-(1D-myo-inositol-3-phosphate)</name>
        <dbReference type="ChEBI" id="CHEBI:58088"/>
    </ligand>
</feature>
<feature type="binding site" evidence="2">
    <location>
        <position position="378"/>
    </location>
    <ligand>
        <name>a 1,2-diacyl-sn-glycero-3-phospho-(1D-myo-inositol-3,5-bisphosphate)</name>
        <dbReference type="ChEBI" id="CHEBI:57923"/>
    </ligand>
</feature>
<feature type="binding site" evidence="2">
    <location>
        <position position="382"/>
    </location>
    <ligand>
        <name>a 1,2-diacyl-sn-glycero-3-phospho-(1D-myo-inositol-3,5-bisphosphate)</name>
        <dbReference type="ChEBI" id="CHEBI:57923"/>
    </ligand>
</feature>
<feature type="binding site" evidence="2">
    <location>
        <position position="382"/>
    </location>
    <ligand>
        <name>a 1,2-diacyl-sn-glycero-3-phospho-(1D-myo-inositol-3-phosphate)</name>
        <dbReference type="ChEBI" id="CHEBI:58088"/>
    </ligand>
</feature>
<feature type="modified residue" description="Phosphotyrosine" evidence="17">
    <location>
        <position position="108"/>
    </location>
</feature>
<feature type="modified residue" description="Phosphoserine" evidence="3">
    <location>
        <position position="557"/>
    </location>
</feature>
<feature type="modified residue" description="Phosphoserine" evidence="3">
    <location>
        <position position="585"/>
    </location>
</feature>
<feature type="modified residue" description="Phosphoserine" evidence="3">
    <location>
        <position position="607"/>
    </location>
</feature>
<feature type="splice variant" id="VSP_060069" description="In isoform 2." evidence="10">
    <original>K</original>
    <variation>KHRMQSWWDTQKDIGRIIVRISSKIWNDEKIRESDERKR</variation>
    <location>
        <position position="242"/>
    </location>
</feature>
<feature type="mutagenesis site" description="Probable loss of catalytic activity. Loss of macropinocytosis." evidence="9">
    <original>CSDGWDR</original>
    <variation>ASDGWDA</variation>
    <location>
        <begin position="336"/>
        <end position="342"/>
    </location>
</feature>
<proteinExistence type="evidence at protein level"/>
<sequence length="617" mass="70933">MEHIRTTKVEQVKLLDRFSTNNKSLTGTLYLTATHLLFIDAQQKETWILHHHIASVEKLALTTSGCPLVIQCKNFRIVHFIVPRERDCHDIYNSLLQLSKQAKYEDLYAFSYNPKQNDTERRNGWQLIDLAAEYERMGVPNANWQLSDANREYKVCETYPRELYVPRTASRPVIVGSSNFRSKGRLPVLSYCRQGTEAAICRCSQPLSGFSARCLEDEHLLQAISKANPGNRYMYVVDTRPKLNAIANRAAGKGYENEDNYSNIRFQFVGIENIHVMRSSLQKLLEVNGSKGLSVNDFYSGLESSGWLRHIKAVLDAAIFLAKAIVVENASVLVHCSDGWDRTSQVCSLGSLLLDSYYRTMKGFMVLIEKDWISFGHKFSERCGHLDGDPREVSPVFTQFLECVWHLTQQFPQAFEFNEAFLLQIHEHIHSCQFGNFLGNCQKEREELRLKEKTYSLWPFLLDDKKKYLNPLYSSKSQRLTVLEPNTASFNFKFWRNMYHQFDRTLHPRQSVLSIIMNMNEQSKQLEEDIKDLEAKIKQCKNGILTKELLHAVHPESPALKTSLCLKEPSLLPVKDTLRAIEGSSPADNRYCDYAEEFSKSEPTVVSLEYGVARMTC</sequence>
<evidence type="ECO:0000250" key="1">
    <source>
        <dbReference type="UniProtKB" id="A0A0G2JXT6"/>
    </source>
</evidence>
<evidence type="ECO:0000250" key="2">
    <source>
        <dbReference type="UniProtKB" id="Q13614"/>
    </source>
</evidence>
<evidence type="ECO:0000250" key="3">
    <source>
        <dbReference type="UniProtKB" id="Q9Y217"/>
    </source>
</evidence>
<evidence type="ECO:0000255" key="4"/>
<evidence type="ECO:0000255" key="5">
    <source>
        <dbReference type="PROSITE-ProRule" id="PRU00669"/>
    </source>
</evidence>
<evidence type="ECO:0000255" key="6">
    <source>
        <dbReference type="PROSITE-ProRule" id="PRU10044"/>
    </source>
</evidence>
<evidence type="ECO:0000269" key="7">
    <source>
    </source>
</evidence>
<evidence type="ECO:0000269" key="8">
    <source>
    </source>
</evidence>
<evidence type="ECO:0000269" key="9">
    <source>
    </source>
</evidence>
<evidence type="ECO:0000305" key="10"/>
<evidence type="ECO:0000312" key="11">
    <source>
        <dbReference type="EMBL" id="AAH20019.1"/>
    </source>
</evidence>
<evidence type="ECO:0000312" key="12">
    <source>
        <dbReference type="EMBL" id="BAC36259.1"/>
    </source>
</evidence>
<evidence type="ECO:0000312" key="13">
    <source>
        <dbReference type="EMBL" id="BAE32884.1"/>
    </source>
</evidence>
<evidence type="ECO:0000312" key="14">
    <source>
        <dbReference type="EMBL" id="EDL36118.1"/>
    </source>
</evidence>
<evidence type="ECO:0000312" key="15">
    <source>
        <dbReference type="MGI" id="MGI:2145637"/>
    </source>
</evidence>
<evidence type="ECO:0000312" key="16">
    <source>
        <dbReference type="Proteomes" id="UP000000589"/>
    </source>
</evidence>
<evidence type="ECO:0007744" key="17">
    <source>
    </source>
</evidence>